<gene>
    <name evidence="11" type="primary">vhl-1</name>
    <name evidence="11" type="ORF">F08G12.4</name>
</gene>
<keyword id="KW-1185">Reference proteome</keyword>
<keyword id="KW-0833">Ubl conjugation pathway</keyword>
<name>VHL_CAEEL</name>
<reference evidence="10" key="1">
    <citation type="journal article" date="1998" name="Science">
        <title>Genome sequence of the nematode C. elegans: a platform for investigating biology.</title>
        <authorList>
            <consortium name="The C. elegans sequencing consortium"/>
        </authorList>
    </citation>
    <scope>NUCLEOTIDE SEQUENCE [LARGE SCALE GENOMIC DNA]</scope>
    <source>
        <strain evidence="10">Bristol N2</strain>
    </source>
</reference>
<reference evidence="9" key="2">
    <citation type="journal article" date="2001" name="Cell">
        <title>C. elegans EGL-9 and mammalian homologs define a family of dioxygenases that regulate HIF by prolyl hydroxylation.</title>
        <authorList>
            <person name="Epstein A.C.R."/>
            <person name="Gleadle J.M."/>
            <person name="McNeill L.A."/>
            <person name="Hewitson K.S."/>
            <person name="O'Rourke J."/>
            <person name="Mole D.R."/>
            <person name="Mukherji M."/>
            <person name="Metzen E."/>
            <person name="Wilson M.I."/>
            <person name="Dhanda A."/>
            <person name="Tian Y.M."/>
            <person name="Masson N."/>
            <person name="Hamilton D.L."/>
            <person name="Jaakkola P."/>
            <person name="Barstead R."/>
            <person name="Hodgkin J."/>
            <person name="Maxwell P.H."/>
            <person name="Pugh C.W."/>
            <person name="Schofield C.J."/>
            <person name="Ratcliffe P.J."/>
        </authorList>
    </citation>
    <scope>FUNCTION</scope>
    <scope>INTERACTION WITH HIF-1</scope>
</reference>
<reference evidence="9" key="3">
    <citation type="journal article" date="2003" name="Physiol. Genomics">
        <title>HIF-1 is required for heat acclimation in the nematode Caenorhabditis elegans.</title>
        <authorList>
            <person name="Treinin M."/>
            <person name="Shliar J."/>
            <person name="Jiang H."/>
            <person name="Powell-Coffman J.A."/>
            <person name="Bromberg Z."/>
            <person name="Horowitz M."/>
        </authorList>
    </citation>
    <scope>FUNCTION</scope>
    <scope>DISRUPTION PHENOTYPE</scope>
</reference>
<reference evidence="9" key="4">
    <citation type="journal article" date="2005" name="Mol. Microbiol.">
        <title>Paralysis and killing of Caenorhabditis elegans by enteropathogenic Escherichia coli requires the bacterial tryptophanase gene.</title>
        <authorList>
            <person name="Anyanful A."/>
            <person name="Dolan-Livengood J.M."/>
            <person name="Lewis T."/>
            <person name="Sheth S."/>
            <person name="Dezalia M.N."/>
            <person name="Sherman M.A."/>
            <person name="Kalman L.V."/>
            <person name="Benian G.M."/>
            <person name="Kalman D."/>
        </authorList>
    </citation>
    <scope>FUNCTION</scope>
    <scope>DISRUPTION PHENOTYPE</scope>
</reference>
<reference evidence="9" key="5">
    <citation type="journal article" date="2009" name="PLoS Pathog.">
        <title>Hypoxia and the hypoxic response pathway protect against pore-forming toxins in C. elegans.</title>
        <authorList>
            <person name="Bellier A."/>
            <person name="Chen C.S."/>
            <person name="Kao C.Y."/>
            <person name="Cinar H.N."/>
            <person name="Aroian R.V."/>
        </authorList>
    </citation>
    <scope>FUNCTION</scope>
    <scope>DISRUPTION PHENOTYPE</scope>
</reference>
<reference evidence="9" key="6">
    <citation type="journal article" date="2009" name="Science">
        <title>Proteasomal regulation of the hypoxic response modulates aging in C. elegans.</title>
        <authorList>
            <person name="Mehta R."/>
            <person name="Steinkraus K.A."/>
            <person name="Sutphin G.L."/>
            <person name="Ramos F.J."/>
            <person name="Shamieh L.S."/>
            <person name="Huh A."/>
            <person name="Davis C."/>
            <person name="Chandler-Brown D."/>
            <person name="Kaeberlein M."/>
        </authorList>
    </citation>
    <scope>FUNCTION</scope>
    <scope>DISRUPTION PHENOTYPE</scope>
</reference>
<reference evidence="9" key="7">
    <citation type="journal article" date="2010" name="PLoS Pathog.">
        <title>C. elegans SWAN-1 Binds to EGL-9 and regulates HIF-1-mediated resistance to the bacterial pathogen Pseudomonas aeruginosa PAO1.</title>
        <authorList>
            <person name="Shao Z."/>
            <person name="Zhang Y."/>
            <person name="Ye Q."/>
            <person name="Saldanha J.N."/>
            <person name="Powell-Coffman J.A."/>
        </authorList>
    </citation>
    <scope>FUNCTION</scope>
</reference>
<reference evidence="9" key="8">
    <citation type="journal article" date="2012" name="PLoS Genet.">
        <title>Insulin/IGF-1 and hypoxia signaling act in concert to regulate iron homeostasis in Caenorhabditis elegans.</title>
        <authorList>
            <person name="Ackerman D."/>
            <person name="Gems D."/>
        </authorList>
    </citation>
    <scope>FUNCTION</scope>
</reference>
<protein>
    <recommendedName>
        <fullName evidence="11">von Hippel-Lindau tumor suppressor homolog</fullName>
    </recommendedName>
</protein>
<sequence length="174" mass="20345">MSDGSMDDDGRLFPDLGSSTHDNREIRVRFLNRCAYPVDVFWLNPSKQPTKYGTLAQKKYLDIKTFKDHPWVARRSFDGCKVLVNEKEVFWPEPAPRMNLIVRNHCVITMKVQSLREIAGRSFLRHNPTEVPNKIKGLPRELQFEVKHFLDRKQEYSEIVCRSIPPPGPQRPQQ</sequence>
<dbReference type="EMBL" id="Z66561">
    <property type="protein sequence ID" value="CAA91456.1"/>
    <property type="molecule type" value="Genomic_DNA"/>
</dbReference>
<dbReference type="PIR" id="T20589">
    <property type="entry name" value="T20589"/>
</dbReference>
<dbReference type="RefSeq" id="NP_509889.1">
    <property type="nucleotide sequence ID" value="NM_077488.6"/>
</dbReference>
<dbReference type="SMR" id="Q19213"/>
<dbReference type="FunCoup" id="Q19213">
    <property type="interactions" value="93"/>
</dbReference>
<dbReference type="IntAct" id="Q19213">
    <property type="interactions" value="4"/>
</dbReference>
<dbReference type="MINT" id="Q19213"/>
<dbReference type="STRING" id="6239.F08G12.4.1"/>
<dbReference type="PaxDb" id="6239-F08G12.4"/>
<dbReference type="EnsemblMetazoa" id="F08G12.4.1">
    <property type="protein sequence ID" value="F08G12.4.1"/>
    <property type="gene ID" value="WBGene00006922"/>
</dbReference>
<dbReference type="GeneID" id="181321"/>
<dbReference type="KEGG" id="cel:CELE_F08G12.4"/>
<dbReference type="UCSC" id="F08G12.4">
    <property type="organism name" value="c. elegans"/>
</dbReference>
<dbReference type="AGR" id="WB:WBGene00006922"/>
<dbReference type="CTD" id="181321"/>
<dbReference type="WormBase" id="F08G12.4">
    <property type="protein sequence ID" value="CE03169"/>
    <property type="gene ID" value="WBGene00006922"/>
    <property type="gene designation" value="vhl-1"/>
</dbReference>
<dbReference type="eggNOG" id="KOG4710">
    <property type="taxonomic scope" value="Eukaryota"/>
</dbReference>
<dbReference type="HOGENOM" id="CLU_116090_1_0_1"/>
<dbReference type="InParanoid" id="Q19213"/>
<dbReference type="OMA" id="NHPWVAR"/>
<dbReference type="OrthoDB" id="413400at2759"/>
<dbReference type="PhylomeDB" id="Q19213"/>
<dbReference type="Reactome" id="R-CEL-1234176">
    <property type="pathway name" value="Oxygen-dependent proline hydroxylation of Hypoxia-inducible Factor Alpha"/>
</dbReference>
<dbReference type="Reactome" id="R-CEL-3232142">
    <property type="pathway name" value="SUMOylation of ubiquitinylation proteins"/>
</dbReference>
<dbReference type="Reactome" id="R-CEL-8951664">
    <property type="pathway name" value="Neddylation"/>
</dbReference>
<dbReference type="Reactome" id="R-CEL-9706019">
    <property type="pathway name" value="RHOBTB3 ATPase cycle"/>
</dbReference>
<dbReference type="Reactome" id="R-CEL-983168">
    <property type="pathway name" value="Antigen processing: Ubiquitination &amp; Proteasome degradation"/>
</dbReference>
<dbReference type="UniPathway" id="UPA00143"/>
<dbReference type="PRO" id="PR:Q19213"/>
<dbReference type="Proteomes" id="UP000001940">
    <property type="component" value="Chromosome X"/>
</dbReference>
<dbReference type="Bgee" id="WBGene00006922">
    <property type="expression patterns" value="Expressed in embryo and 4 other cell types or tissues"/>
</dbReference>
<dbReference type="GO" id="GO:0031462">
    <property type="term" value="C:Cul2-RING ubiquitin ligase complex"/>
    <property type="evidence" value="ECO:0000353"/>
    <property type="project" value="WormBase"/>
</dbReference>
<dbReference type="GO" id="GO:0005634">
    <property type="term" value="C:nucleus"/>
    <property type="evidence" value="ECO:0000318"/>
    <property type="project" value="GO_Central"/>
</dbReference>
<dbReference type="GO" id="GO:0030891">
    <property type="term" value="C:VCB complex"/>
    <property type="evidence" value="ECO:0000318"/>
    <property type="project" value="GO_Central"/>
</dbReference>
<dbReference type="GO" id="GO:0016567">
    <property type="term" value="P:protein ubiquitination"/>
    <property type="evidence" value="ECO:0000318"/>
    <property type="project" value="GO_Central"/>
</dbReference>
<dbReference type="GO" id="GO:0001666">
    <property type="term" value="P:response to hypoxia"/>
    <property type="evidence" value="ECO:0000315"/>
    <property type="project" value="WormBase"/>
</dbReference>
<dbReference type="CDD" id="cd05468">
    <property type="entry name" value="pVHL"/>
    <property type="match status" value="1"/>
</dbReference>
<dbReference type="FunFam" id="2.60.40.780:FF:000001">
    <property type="entry name" value="von Hippel-Lindau disease tumor suppressor"/>
    <property type="match status" value="1"/>
</dbReference>
<dbReference type="Gene3D" id="2.60.40.780">
    <property type="entry name" value="von Hippel-Lindau disease tumour suppressor, beta domain"/>
    <property type="match status" value="1"/>
</dbReference>
<dbReference type="InterPro" id="IPR024053">
    <property type="entry name" value="VHL_beta_dom"/>
</dbReference>
<dbReference type="InterPro" id="IPR037140">
    <property type="entry name" value="VHL_beta_dom_sf"/>
</dbReference>
<dbReference type="InterPro" id="IPR036208">
    <property type="entry name" value="VHL_sf"/>
</dbReference>
<dbReference type="InterPro" id="IPR022772">
    <property type="entry name" value="VHL_tumour_suppress_b/a_dom"/>
</dbReference>
<dbReference type="Pfam" id="PF01847">
    <property type="entry name" value="VHL"/>
    <property type="match status" value="1"/>
</dbReference>
<dbReference type="SUPFAM" id="SSF49468">
    <property type="entry name" value="VHL"/>
    <property type="match status" value="1"/>
</dbReference>
<evidence type="ECO:0000250" key="1">
    <source>
        <dbReference type="UniProtKB" id="P40337"/>
    </source>
</evidence>
<evidence type="ECO:0000269" key="2">
    <source>
    </source>
</evidence>
<evidence type="ECO:0000269" key="3">
    <source>
    </source>
</evidence>
<evidence type="ECO:0000269" key="4">
    <source>
    </source>
</evidence>
<evidence type="ECO:0000269" key="5">
    <source>
    </source>
</evidence>
<evidence type="ECO:0000269" key="6">
    <source>
    </source>
</evidence>
<evidence type="ECO:0000269" key="7">
    <source>
    </source>
</evidence>
<evidence type="ECO:0000269" key="8">
    <source>
    </source>
</evidence>
<evidence type="ECO:0000305" key="9"/>
<evidence type="ECO:0000312" key="10">
    <source>
        <dbReference type="Proteomes" id="UP000001940"/>
    </source>
</evidence>
<evidence type="ECO:0000312" key="11">
    <source>
        <dbReference type="WormBase" id="F08G12.4"/>
    </source>
</evidence>
<feature type="chain" id="PRO_0000433368" description="von Hippel-Lindau tumor suppressor homolog" evidence="9">
    <location>
        <begin position="1"/>
        <end position="174"/>
    </location>
</feature>
<organism evidence="10">
    <name type="scientific">Caenorhabditis elegans</name>
    <dbReference type="NCBI Taxonomy" id="6239"/>
    <lineage>
        <taxon>Eukaryota</taxon>
        <taxon>Metazoa</taxon>
        <taxon>Ecdysozoa</taxon>
        <taxon>Nematoda</taxon>
        <taxon>Chromadorea</taxon>
        <taxon>Rhabditida</taxon>
        <taxon>Rhabditina</taxon>
        <taxon>Rhabditomorpha</taxon>
        <taxon>Rhabditoidea</taxon>
        <taxon>Rhabditidae</taxon>
        <taxon>Peloderinae</taxon>
        <taxon>Caenorhabditis</taxon>
    </lineage>
</organism>
<proteinExistence type="evidence at protein level"/>
<accession>Q19213</accession>
<comment type="function">
    <text evidence="2 3 4 5 6 7 8">Involved in the response to variation in environmental oxygen levels by targeting the hypoxia-inducible transcription factor hif-1 for proteasomal degradation when oxygen levels are normal (around 20%) (PubMed:11595184). By regulating hif-1 expression, plays a role in iron homeostasis, aging, heat acclimation and progeny size (PubMed:12686697, PubMed:19372390, PubMed:22396654). Mediates resistance to enteropathogenic E.coli (PubMed:16091039). Mediates susceptibility to B.thuringiensis pore-forming toxins (PubMed:20011506). Not involved in P.aeruginosa susceptibility (PubMed:20865124).</text>
</comment>
<comment type="pathway">
    <text evidence="1">Protein modification; protein ubiquitination.</text>
</comment>
<comment type="subunit">
    <text evidence="1 2">Interacts with hif-1 (hydroxylated on 'Pro-621'); the interaction induces hif-1 degradation (PubMed:11595184). May be a component of the cullin E3 ubiquitin ligase complex (By similarity).</text>
</comment>
<comment type="disruption phenotype">
    <text evidence="3 4 5 6">Increased mortality induced by B.thuringiensis pore-forming toxins Cry21A and Cry21B (PubMed:20011506). Increased mortality and sensitivity to paralysis induced by enteropathogenic E.coli infection (PubMed:16091039). Increased mortality upon heat stress (PubMed:12686697). RNAi-mediated knockdown causes an enhanced resistance to polyglutamine or amyloid-beta-mediated paralysis and an increase in adult life span.</text>
</comment>
<comment type="similarity">
    <text evidence="9">Belongs to the VHL family.</text>
</comment>